<reference key="1">
    <citation type="submission" date="2008-10" db="EMBL/GenBank/DDBJ databases">
        <title>Genome sequence of Ureaplasma urealyticum serovar 10 ATCC-33699.</title>
        <authorList>
            <person name="Shrivastava S."/>
            <person name="Methe B.A."/>
            <person name="Glass J."/>
            <person name="White K."/>
            <person name="Duffy L.B."/>
        </authorList>
    </citation>
    <scope>NUCLEOTIDE SEQUENCE [LARGE SCALE GENOMIC DNA]</scope>
    <source>
        <strain>ATCC 33699 / Western</strain>
    </source>
</reference>
<gene>
    <name evidence="1" type="primary">efp</name>
    <name type="ordered locus">UUR10_0295</name>
</gene>
<name>EFP_UREU1</name>
<dbReference type="EMBL" id="CP001184">
    <property type="protein sequence ID" value="ACI60111.1"/>
    <property type="molecule type" value="Genomic_DNA"/>
</dbReference>
<dbReference type="RefSeq" id="WP_004025677.1">
    <property type="nucleotide sequence ID" value="NC_011374.1"/>
</dbReference>
<dbReference type="SMR" id="B5ZBA7"/>
<dbReference type="STRING" id="565575.UUR10_0295"/>
<dbReference type="GeneID" id="93848774"/>
<dbReference type="KEGG" id="uue:UUR10_0295"/>
<dbReference type="eggNOG" id="COG0231">
    <property type="taxonomic scope" value="Bacteria"/>
</dbReference>
<dbReference type="HOGENOM" id="CLU_074944_2_1_14"/>
<dbReference type="OrthoDB" id="9801844at2"/>
<dbReference type="UniPathway" id="UPA00345"/>
<dbReference type="Proteomes" id="UP000002018">
    <property type="component" value="Chromosome"/>
</dbReference>
<dbReference type="GO" id="GO:0005737">
    <property type="term" value="C:cytoplasm"/>
    <property type="evidence" value="ECO:0007669"/>
    <property type="project" value="UniProtKB-SubCell"/>
</dbReference>
<dbReference type="GO" id="GO:0003746">
    <property type="term" value="F:translation elongation factor activity"/>
    <property type="evidence" value="ECO:0007669"/>
    <property type="project" value="UniProtKB-UniRule"/>
</dbReference>
<dbReference type="GO" id="GO:0043043">
    <property type="term" value="P:peptide biosynthetic process"/>
    <property type="evidence" value="ECO:0007669"/>
    <property type="project" value="InterPro"/>
</dbReference>
<dbReference type="CDD" id="cd04470">
    <property type="entry name" value="S1_EF-P_repeat_1"/>
    <property type="match status" value="1"/>
</dbReference>
<dbReference type="CDD" id="cd05794">
    <property type="entry name" value="S1_EF-P_repeat_2"/>
    <property type="match status" value="1"/>
</dbReference>
<dbReference type="FunFam" id="2.40.50.140:FF:000004">
    <property type="entry name" value="Elongation factor P"/>
    <property type="match status" value="1"/>
</dbReference>
<dbReference type="FunFam" id="2.40.50.140:FF:000009">
    <property type="entry name" value="Elongation factor P"/>
    <property type="match status" value="1"/>
</dbReference>
<dbReference type="Gene3D" id="2.30.30.30">
    <property type="match status" value="1"/>
</dbReference>
<dbReference type="Gene3D" id="2.40.50.140">
    <property type="entry name" value="Nucleic acid-binding proteins"/>
    <property type="match status" value="2"/>
</dbReference>
<dbReference type="HAMAP" id="MF_00141">
    <property type="entry name" value="EF_P"/>
    <property type="match status" value="1"/>
</dbReference>
<dbReference type="InterPro" id="IPR015365">
    <property type="entry name" value="Elong-fact-P_C"/>
</dbReference>
<dbReference type="InterPro" id="IPR012340">
    <property type="entry name" value="NA-bd_OB-fold"/>
</dbReference>
<dbReference type="InterPro" id="IPR014722">
    <property type="entry name" value="Rib_uL2_dom2"/>
</dbReference>
<dbReference type="InterPro" id="IPR020599">
    <property type="entry name" value="Transl_elong_fac_P/YeiP"/>
</dbReference>
<dbReference type="InterPro" id="IPR013185">
    <property type="entry name" value="Transl_elong_KOW-like"/>
</dbReference>
<dbReference type="InterPro" id="IPR001059">
    <property type="entry name" value="Transl_elong_P/YeiP_cen"/>
</dbReference>
<dbReference type="InterPro" id="IPR011768">
    <property type="entry name" value="Transl_elongation_fac_P"/>
</dbReference>
<dbReference type="InterPro" id="IPR008991">
    <property type="entry name" value="Translation_prot_SH3-like_sf"/>
</dbReference>
<dbReference type="NCBIfam" id="TIGR00038">
    <property type="entry name" value="efp"/>
    <property type="match status" value="1"/>
</dbReference>
<dbReference type="NCBIfam" id="NF001810">
    <property type="entry name" value="PRK00529.1"/>
    <property type="match status" value="1"/>
</dbReference>
<dbReference type="PANTHER" id="PTHR30053">
    <property type="entry name" value="ELONGATION FACTOR P"/>
    <property type="match status" value="1"/>
</dbReference>
<dbReference type="PANTHER" id="PTHR30053:SF12">
    <property type="entry name" value="ELONGATION FACTOR P (EF-P) FAMILY PROTEIN"/>
    <property type="match status" value="1"/>
</dbReference>
<dbReference type="Pfam" id="PF01132">
    <property type="entry name" value="EFP"/>
    <property type="match status" value="1"/>
</dbReference>
<dbReference type="Pfam" id="PF08207">
    <property type="entry name" value="EFP_N"/>
    <property type="match status" value="1"/>
</dbReference>
<dbReference type="Pfam" id="PF09285">
    <property type="entry name" value="Elong-fact-P_C"/>
    <property type="match status" value="1"/>
</dbReference>
<dbReference type="PIRSF" id="PIRSF005901">
    <property type="entry name" value="EF-P"/>
    <property type="match status" value="1"/>
</dbReference>
<dbReference type="SMART" id="SM01185">
    <property type="entry name" value="EFP"/>
    <property type="match status" value="1"/>
</dbReference>
<dbReference type="SMART" id="SM00841">
    <property type="entry name" value="Elong-fact-P_C"/>
    <property type="match status" value="1"/>
</dbReference>
<dbReference type="SUPFAM" id="SSF50249">
    <property type="entry name" value="Nucleic acid-binding proteins"/>
    <property type="match status" value="2"/>
</dbReference>
<dbReference type="SUPFAM" id="SSF50104">
    <property type="entry name" value="Translation proteins SH3-like domain"/>
    <property type="match status" value="1"/>
</dbReference>
<comment type="function">
    <text evidence="1">Involved in peptide bond synthesis. Stimulates efficient translation and peptide-bond synthesis on native or reconstituted 70S ribosomes in vitro. Probably functions indirectly by altering the affinity of the ribosome for aminoacyl-tRNA, thus increasing their reactivity as acceptors for peptidyl transferase.</text>
</comment>
<comment type="pathway">
    <text evidence="1">Protein biosynthesis; polypeptide chain elongation.</text>
</comment>
<comment type="subcellular location">
    <subcellularLocation>
        <location evidence="1">Cytoplasm</location>
    </subcellularLocation>
</comment>
<comment type="similarity">
    <text evidence="1">Belongs to the elongation factor P family.</text>
</comment>
<protein>
    <recommendedName>
        <fullName evidence="1">Elongation factor P</fullName>
        <shortName evidence="1">EF-P</shortName>
    </recommendedName>
</protein>
<accession>B5ZBA7</accession>
<keyword id="KW-0963">Cytoplasm</keyword>
<keyword id="KW-0251">Elongation factor</keyword>
<keyword id="KW-0648">Protein biosynthesis</keyword>
<sequence>MATIIQAKDLRAGHTFLYKGSIYQVIENSFNKTAMREGIVKCKVKNLRTGAITVEVLTGEKVEQAIIEKSKMTFSYDDGSGYVFMDNETYEQISIPYNQLSWEKNFIEEGTEVSVMRYDGELMGVSLPDQLVVTIVEAEEAVQGNSVQNATKRAWLASKWEFQVPQFIKSGEKVIINPSNGQYVGRAK</sequence>
<organism>
    <name type="scientific">Ureaplasma urealyticum serovar 10 (strain ATCC 33699 / Western)</name>
    <dbReference type="NCBI Taxonomy" id="565575"/>
    <lineage>
        <taxon>Bacteria</taxon>
        <taxon>Bacillati</taxon>
        <taxon>Mycoplasmatota</taxon>
        <taxon>Mycoplasmoidales</taxon>
        <taxon>Mycoplasmoidaceae</taxon>
        <taxon>Ureaplasma</taxon>
    </lineage>
</organism>
<feature type="chain" id="PRO_1000096222" description="Elongation factor P">
    <location>
        <begin position="1"/>
        <end position="188"/>
    </location>
</feature>
<evidence type="ECO:0000255" key="1">
    <source>
        <dbReference type="HAMAP-Rule" id="MF_00141"/>
    </source>
</evidence>
<proteinExistence type="inferred from homology"/>